<sequence length="392" mass="43796">MTRPFNRVHLIVMDSVGIGEAPDAADFKDEGSHTLRHTLEGFDQTLPNLEKLGLGNIDKLPVVNAVEQPEAYYTKLSEASVGKDTMTGHWEIMGLNIMQPFKVYPNGFPEELIQQIEEMTGRKVVANKPASGTQIIDEWGEHQMKTGDLIVYTSADPVLQIAAHEDIIPLEELYDICEKVRELTKDPKYLIGRIIARPYVGEPGNFTRTSNRHDYALKPFGKTVLDHLKDGGYDVIAIGKINDIYDGEGVTEAVRTKSNMDGMDQLMKIVKKDFTGISFLNLVDFDALYGHRRDKPGYAQAIKDFDDRLPELFSNLKEDDLVIITADHGNDPTAPGTDHTREYIPVIMYSPKFKGGHALESDTTFSSIGATIADNFNVTLPEFGKSYLKELK</sequence>
<keyword id="KW-0963">Cytoplasm</keyword>
<keyword id="KW-0413">Isomerase</keyword>
<keyword id="KW-0464">Manganese</keyword>
<keyword id="KW-0479">Metal-binding</keyword>
<dbReference type="EC" id="5.4.2.7" evidence="1"/>
<dbReference type="EMBL" id="BA000018">
    <property type="protein sequence ID" value="BAB41354.1"/>
    <property type="molecule type" value="Genomic_DNA"/>
</dbReference>
<dbReference type="PIR" id="G89774">
    <property type="entry name" value="G89774"/>
</dbReference>
<dbReference type="RefSeq" id="WP_000197806.1">
    <property type="nucleotide sequence ID" value="NC_002745.2"/>
</dbReference>
<dbReference type="SMR" id="P99100"/>
<dbReference type="EnsemblBacteria" id="BAB41354">
    <property type="protein sequence ID" value="BAB41354"/>
    <property type="gene ID" value="BAB41354"/>
</dbReference>
<dbReference type="KEGG" id="sau:SA0134"/>
<dbReference type="HOGENOM" id="CLU_053861_0_0_9"/>
<dbReference type="UniPathway" id="UPA00002">
    <property type="reaction ID" value="UER00467"/>
</dbReference>
<dbReference type="GO" id="GO:0005829">
    <property type="term" value="C:cytosol"/>
    <property type="evidence" value="ECO:0007669"/>
    <property type="project" value="TreeGrafter"/>
</dbReference>
<dbReference type="GO" id="GO:0000287">
    <property type="term" value="F:magnesium ion binding"/>
    <property type="evidence" value="ECO:0007669"/>
    <property type="project" value="InterPro"/>
</dbReference>
<dbReference type="GO" id="GO:0030145">
    <property type="term" value="F:manganese ion binding"/>
    <property type="evidence" value="ECO:0007669"/>
    <property type="project" value="UniProtKB-UniRule"/>
</dbReference>
<dbReference type="GO" id="GO:0008973">
    <property type="term" value="F:phosphopentomutase activity"/>
    <property type="evidence" value="ECO:0007669"/>
    <property type="project" value="UniProtKB-UniRule"/>
</dbReference>
<dbReference type="GO" id="GO:0006018">
    <property type="term" value="P:2-deoxyribose 1-phosphate catabolic process"/>
    <property type="evidence" value="ECO:0007669"/>
    <property type="project" value="UniProtKB-UniRule"/>
</dbReference>
<dbReference type="GO" id="GO:0006015">
    <property type="term" value="P:5-phosphoribose 1-diphosphate biosynthetic process"/>
    <property type="evidence" value="ECO:0007669"/>
    <property type="project" value="UniProtKB-UniPathway"/>
</dbReference>
<dbReference type="GO" id="GO:0043094">
    <property type="term" value="P:metabolic compound salvage"/>
    <property type="evidence" value="ECO:0007669"/>
    <property type="project" value="InterPro"/>
</dbReference>
<dbReference type="GO" id="GO:0009117">
    <property type="term" value="P:nucleotide metabolic process"/>
    <property type="evidence" value="ECO:0007669"/>
    <property type="project" value="InterPro"/>
</dbReference>
<dbReference type="CDD" id="cd16009">
    <property type="entry name" value="PPM"/>
    <property type="match status" value="1"/>
</dbReference>
<dbReference type="FunFam" id="3.30.70.1250:FF:000001">
    <property type="entry name" value="Phosphopentomutase"/>
    <property type="match status" value="1"/>
</dbReference>
<dbReference type="Gene3D" id="3.40.720.10">
    <property type="entry name" value="Alkaline Phosphatase, subunit A"/>
    <property type="match status" value="1"/>
</dbReference>
<dbReference type="Gene3D" id="3.30.70.1250">
    <property type="entry name" value="Phosphopentomutase"/>
    <property type="match status" value="1"/>
</dbReference>
<dbReference type="HAMAP" id="MF_00740">
    <property type="entry name" value="Phosphopentomut"/>
    <property type="match status" value="1"/>
</dbReference>
<dbReference type="InterPro" id="IPR017850">
    <property type="entry name" value="Alkaline_phosphatase_core_sf"/>
</dbReference>
<dbReference type="InterPro" id="IPR010045">
    <property type="entry name" value="DeoB"/>
</dbReference>
<dbReference type="InterPro" id="IPR006124">
    <property type="entry name" value="Metalloenzyme"/>
</dbReference>
<dbReference type="InterPro" id="IPR024052">
    <property type="entry name" value="Phosphopentomutase_DeoB_cap_sf"/>
</dbReference>
<dbReference type="NCBIfam" id="TIGR01696">
    <property type="entry name" value="deoB"/>
    <property type="match status" value="1"/>
</dbReference>
<dbReference type="NCBIfam" id="NF003766">
    <property type="entry name" value="PRK05362.1"/>
    <property type="match status" value="1"/>
</dbReference>
<dbReference type="PANTHER" id="PTHR21110">
    <property type="entry name" value="PHOSPHOPENTOMUTASE"/>
    <property type="match status" value="1"/>
</dbReference>
<dbReference type="PANTHER" id="PTHR21110:SF0">
    <property type="entry name" value="PHOSPHOPENTOMUTASE"/>
    <property type="match status" value="1"/>
</dbReference>
<dbReference type="Pfam" id="PF01676">
    <property type="entry name" value="Metalloenzyme"/>
    <property type="match status" value="1"/>
</dbReference>
<dbReference type="PIRSF" id="PIRSF001491">
    <property type="entry name" value="Ppentomutase"/>
    <property type="match status" value="1"/>
</dbReference>
<dbReference type="SUPFAM" id="SSF53649">
    <property type="entry name" value="Alkaline phosphatase-like"/>
    <property type="match status" value="1"/>
</dbReference>
<dbReference type="SUPFAM" id="SSF143856">
    <property type="entry name" value="DeoB insert domain-like"/>
    <property type="match status" value="1"/>
</dbReference>
<comment type="function">
    <text evidence="1">Isomerase that catalyzes the conversion of deoxy-ribose 1-phosphate (dRib-1-P) and ribose 1-phosphate (Rib-1-P) to deoxy-ribose 5-phosphate (dRib-5-P) and ribose 5-phosphate (Rib-5-P), respectively.</text>
</comment>
<comment type="catalytic activity">
    <reaction evidence="1">
        <text>2-deoxy-alpha-D-ribose 1-phosphate = 2-deoxy-D-ribose 5-phosphate</text>
        <dbReference type="Rhea" id="RHEA:27658"/>
        <dbReference type="ChEBI" id="CHEBI:57259"/>
        <dbReference type="ChEBI" id="CHEBI:62877"/>
        <dbReference type="EC" id="5.4.2.7"/>
    </reaction>
</comment>
<comment type="catalytic activity">
    <reaction evidence="1">
        <text>alpha-D-ribose 1-phosphate = D-ribose 5-phosphate</text>
        <dbReference type="Rhea" id="RHEA:18793"/>
        <dbReference type="ChEBI" id="CHEBI:57720"/>
        <dbReference type="ChEBI" id="CHEBI:78346"/>
        <dbReference type="EC" id="5.4.2.7"/>
    </reaction>
</comment>
<comment type="cofactor">
    <cofactor evidence="1">
        <name>Mn(2+)</name>
        <dbReference type="ChEBI" id="CHEBI:29035"/>
    </cofactor>
    <text evidence="1">Binds 2 manganese ions.</text>
</comment>
<comment type="pathway">
    <text evidence="1">Carbohydrate degradation; 2-deoxy-D-ribose 1-phosphate degradation; D-glyceraldehyde 3-phosphate and acetaldehyde from 2-deoxy-alpha-D-ribose 1-phosphate: step 1/2.</text>
</comment>
<comment type="subcellular location">
    <subcellularLocation>
        <location evidence="1">Cytoplasm</location>
    </subcellularLocation>
</comment>
<comment type="similarity">
    <text evidence="1">Belongs to the phosphopentomutase family.</text>
</comment>
<protein>
    <recommendedName>
        <fullName evidence="1">Phosphopentomutase</fullName>
        <ecNumber evidence="1">5.4.2.7</ecNumber>
    </recommendedName>
    <alternativeName>
        <fullName evidence="1">Phosphodeoxyribomutase</fullName>
    </alternativeName>
</protein>
<evidence type="ECO:0000255" key="1">
    <source>
        <dbReference type="HAMAP-Rule" id="MF_00740"/>
    </source>
</evidence>
<reference key="1">
    <citation type="journal article" date="2001" name="Lancet">
        <title>Whole genome sequencing of meticillin-resistant Staphylococcus aureus.</title>
        <authorList>
            <person name="Kuroda M."/>
            <person name="Ohta T."/>
            <person name="Uchiyama I."/>
            <person name="Baba T."/>
            <person name="Yuzawa H."/>
            <person name="Kobayashi I."/>
            <person name="Cui L."/>
            <person name="Oguchi A."/>
            <person name="Aoki K."/>
            <person name="Nagai Y."/>
            <person name="Lian J.-Q."/>
            <person name="Ito T."/>
            <person name="Kanamori M."/>
            <person name="Matsumaru H."/>
            <person name="Maruyama A."/>
            <person name="Murakami H."/>
            <person name="Hosoyama A."/>
            <person name="Mizutani-Ui Y."/>
            <person name="Takahashi N.K."/>
            <person name="Sawano T."/>
            <person name="Inoue R."/>
            <person name="Kaito C."/>
            <person name="Sekimizu K."/>
            <person name="Hirakawa H."/>
            <person name="Kuhara S."/>
            <person name="Goto S."/>
            <person name="Yabuzaki J."/>
            <person name="Kanehisa M."/>
            <person name="Yamashita A."/>
            <person name="Oshima K."/>
            <person name="Furuya K."/>
            <person name="Yoshino C."/>
            <person name="Shiba T."/>
            <person name="Hattori M."/>
            <person name="Ogasawara N."/>
            <person name="Hayashi H."/>
            <person name="Hiramatsu K."/>
        </authorList>
    </citation>
    <scope>NUCLEOTIDE SEQUENCE [LARGE SCALE GENOMIC DNA]</scope>
    <source>
        <strain>N315</strain>
    </source>
</reference>
<reference key="2">
    <citation type="journal article" date="2005" name="J. Microbiol. Methods">
        <title>Correlation of proteomic and transcriptomic profiles of Staphylococcus aureus during the post-exponential phase of growth.</title>
        <authorList>
            <person name="Scherl A."/>
            <person name="Francois P."/>
            <person name="Bento M."/>
            <person name="Deshusses J.M."/>
            <person name="Charbonnier Y."/>
            <person name="Converset V."/>
            <person name="Huyghe A."/>
            <person name="Walter N."/>
            <person name="Hoogland C."/>
            <person name="Appel R.D."/>
            <person name="Sanchez J.-C."/>
            <person name="Zimmermann-Ivol C.G."/>
            <person name="Corthals G.L."/>
            <person name="Hochstrasser D.F."/>
            <person name="Schrenzel J."/>
        </authorList>
    </citation>
    <scope>IDENTIFICATION BY MASS SPECTROMETRY</scope>
    <source>
        <strain>N315</strain>
    </source>
</reference>
<reference key="3">
    <citation type="submission" date="2007-10" db="UniProtKB">
        <title>Shotgun proteomic analysis of total and membrane protein extracts of S. aureus strain N315.</title>
        <authorList>
            <person name="Vaezzadeh A.R."/>
            <person name="Deshusses J."/>
            <person name="Lescuyer P."/>
            <person name="Hochstrasser D.F."/>
        </authorList>
    </citation>
    <scope>IDENTIFICATION BY MASS SPECTROMETRY [LARGE SCALE ANALYSIS]</scope>
    <source>
        <strain>N315</strain>
    </source>
</reference>
<organism>
    <name type="scientific">Staphylococcus aureus (strain N315)</name>
    <dbReference type="NCBI Taxonomy" id="158879"/>
    <lineage>
        <taxon>Bacteria</taxon>
        <taxon>Bacillati</taxon>
        <taxon>Bacillota</taxon>
        <taxon>Bacilli</taxon>
        <taxon>Bacillales</taxon>
        <taxon>Staphylococcaceae</taxon>
        <taxon>Staphylococcus</taxon>
    </lineage>
</organism>
<gene>
    <name evidence="1" type="primary">deoB</name>
    <name type="synonym">drm</name>
    <name type="ordered locus">SA0134</name>
</gene>
<feature type="chain" id="PRO_0000199841" description="Phosphopentomutase">
    <location>
        <begin position="1"/>
        <end position="392"/>
    </location>
</feature>
<feature type="binding site" evidence="1">
    <location>
        <position position="14"/>
    </location>
    <ligand>
        <name>Mn(2+)</name>
        <dbReference type="ChEBI" id="CHEBI:29035"/>
        <label>1</label>
    </ligand>
</feature>
<feature type="binding site" evidence="1">
    <location>
        <position position="286"/>
    </location>
    <ligand>
        <name>Mn(2+)</name>
        <dbReference type="ChEBI" id="CHEBI:29035"/>
        <label>2</label>
    </ligand>
</feature>
<feature type="binding site" evidence="1">
    <location>
        <position position="291"/>
    </location>
    <ligand>
        <name>Mn(2+)</name>
        <dbReference type="ChEBI" id="CHEBI:29035"/>
        <label>2</label>
    </ligand>
</feature>
<feature type="binding site" evidence="1">
    <location>
        <position position="327"/>
    </location>
    <ligand>
        <name>Mn(2+)</name>
        <dbReference type="ChEBI" id="CHEBI:29035"/>
        <label>1</label>
    </ligand>
</feature>
<feature type="binding site" evidence="1">
    <location>
        <position position="328"/>
    </location>
    <ligand>
        <name>Mn(2+)</name>
        <dbReference type="ChEBI" id="CHEBI:29035"/>
        <label>1</label>
    </ligand>
</feature>
<feature type="binding site" evidence="1">
    <location>
        <position position="339"/>
    </location>
    <ligand>
        <name>Mn(2+)</name>
        <dbReference type="ChEBI" id="CHEBI:29035"/>
        <label>2</label>
    </ligand>
</feature>
<name>DEOB_STAAN</name>
<proteinExistence type="evidence at protein level"/>
<accession>P99100</accession>
<accession>Q99X76</accession>